<reference key="1">
    <citation type="journal article" date="2001" name="Plant Cell">
        <title>Multidrug resistance-like genes of Arabidopsis required for auxin transport and auxin-mediated development.</title>
        <authorList>
            <person name="Noh B."/>
            <person name="Murphy A.S."/>
            <person name="Spalding E.P."/>
        </authorList>
    </citation>
    <scope>NUCLEOTIDE SEQUENCE [MRNA]</scope>
    <scope>PROTEIN SEQUENCE OF 523-536 AND 941-947</scope>
    <scope>FUNCTION</scope>
    <scope>TISSUE SPECIFICITY</scope>
    <scope>DEVELOPMENTAL STAGE</scope>
    <scope>INTERACTION WITH NPA</scope>
    <scope>INDUCTION</scope>
    <source>
        <strain>cv. Columbia</strain>
        <tissue>Seedling</tissue>
    </source>
</reference>
<reference key="2">
    <citation type="journal article" date="2000" name="DNA Res.">
        <title>Structural analysis of Arabidopsis thaliana chromosome 3. II. Sequence features of the 4,251,695 bp regions covered by 90 P1, TAC and BAC clones.</title>
        <authorList>
            <person name="Kaneko T."/>
            <person name="Katoh T."/>
            <person name="Sato S."/>
            <person name="Nakamura Y."/>
            <person name="Asamizu E."/>
            <person name="Tabata S."/>
        </authorList>
    </citation>
    <scope>NUCLEOTIDE SEQUENCE [LARGE SCALE GENOMIC DNA]</scope>
    <source>
        <strain>cv. Columbia</strain>
    </source>
</reference>
<reference key="3">
    <citation type="journal article" date="2017" name="Plant J.">
        <title>Araport11: a complete reannotation of the Arabidopsis thaliana reference genome.</title>
        <authorList>
            <person name="Cheng C.Y."/>
            <person name="Krishnakumar V."/>
            <person name="Chan A.P."/>
            <person name="Thibaud-Nissen F."/>
            <person name="Schobel S."/>
            <person name="Town C.D."/>
        </authorList>
    </citation>
    <scope>GENOME REANNOTATION</scope>
    <source>
        <strain>cv. Columbia</strain>
    </source>
</reference>
<reference key="4">
    <citation type="journal article" date="2002" name="Science">
        <title>Functional annotation of a full-length Arabidopsis cDNA collection.</title>
        <authorList>
            <person name="Seki M."/>
            <person name="Narusaka M."/>
            <person name="Kamiya A."/>
            <person name="Ishida J."/>
            <person name="Satou M."/>
            <person name="Sakurai T."/>
            <person name="Nakajima M."/>
            <person name="Enju A."/>
            <person name="Akiyama K."/>
            <person name="Oono Y."/>
            <person name="Muramatsu M."/>
            <person name="Hayashizaki Y."/>
            <person name="Kawai J."/>
            <person name="Carninci P."/>
            <person name="Itoh M."/>
            <person name="Ishii Y."/>
            <person name="Arakawa T."/>
            <person name="Shibata K."/>
            <person name="Shinagawa A."/>
            <person name="Shinozaki K."/>
        </authorList>
    </citation>
    <scope>NUCLEOTIDE SEQUENCE [LARGE SCALE MRNA]</scope>
    <source>
        <strain>cv. Columbia</strain>
    </source>
</reference>
<reference key="5">
    <citation type="journal article" date="2005" name="Plant Cell">
        <title>PGP4, an ATP binding cassette P-glycoprotein, catalyzes auxin transport in Arabidopsis thaliana roots.</title>
        <authorList>
            <person name="Terasaka K."/>
            <person name="Blakeslee J.J."/>
            <person name="Titapiwatanakun B."/>
            <person name="Peer W.A."/>
            <person name="Bandyopadhyay A."/>
            <person name="Makam S.N."/>
            <person name="Lee O.R."/>
            <person name="Richards E.L."/>
            <person name="Murphy A.S."/>
            <person name="Sato F."/>
            <person name="Yazaki K."/>
        </authorList>
    </citation>
    <scope>PROTEIN SEQUENCE OF 36-54; 956-963 AND 1111-1122</scope>
    <scope>INTERACTION WITH NPA</scope>
</reference>
<reference key="6">
    <citation type="journal article" date="2001" name="J. Biol. Chem.">
        <title>The Arabidopsis thaliana ABC protein superfamily, a complete inventory.</title>
        <authorList>
            <person name="Sanchez-Fernandez R."/>
            <person name="Davies T.G."/>
            <person name="Coleman J.O."/>
            <person name="Rea P.A."/>
        </authorList>
    </citation>
    <scope>GENE FAMILY</scope>
    <scope>NOMENCLATURE</scope>
</reference>
<reference key="7">
    <citation type="journal article" date="2003" name="Mol. Biol. Cell">
        <title>TWISTED DWARF1, a unique plasma membrane-anchored immunophilin-like protein, interacts with Arabidopsis multidrug resistance-like transporters AtPGP1 and AtPGP19.</title>
        <authorList>
            <person name="Geisler M."/>
            <person name="Kolukisaoglu H.U."/>
            <person name="Bouchard R."/>
            <person name="Billion K."/>
            <person name="Berger J."/>
            <person name="Saal B."/>
            <person name="Frangne N."/>
            <person name="Koncz-Kalman Z."/>
            <person name="Koncz C."/>
            <person name="Dudler R."/>
            <person name="Blakeslee J.J."/>
            <person name="Murphy A.S."/>
            <person name="Martinoia E."/>
            <person name="Schulz B."/>
        </authorList>
    </citation>
    <scope>FUNCTION</scope>
    <scope>INTERACTION WITH FKBP42/TWD1</scope>
</reference>
<reference key="8">
    <citation type="journal article" date="2005" name="Plant Physiol.">
        <title>Two homologous ATP-binding cassette transporter proteins, AtMDR1 and AtPGP1, regulate Arabidopsis photomorphogenesis and root development by mediating polar auxin transport.</title>
        <authorList>
            <person name="Lin R."/>
            <person name="Wang H."/>
        </authorList>
    </citation>
    <scope>FUNCTION</scope>
    <scope>INDUCTION</scope>
</reference>
<reference key="9">
    <citation type="journal article" date="2007" name="Mol. Cell. Proteomics">
        <title>Temporal analysis of sucrose-induced phosphorylation changes in plasma membrane proteins of Arabidopsis.</title>
        <authorList>
            <person name="Niittylae T."/>
            <person name="Fuglsang A.T."/>
            <person name="Palmgren M.G."/>
            <person name="Frommer W.B."/>
            <person name="Schulze W.X."/>
        </authorList>
    </citation>
    <scope>IDENTIFICATION BY MASS SPECTROMETRY [LARGE SCALE ANALYSIS]</scope>
    <source>
        <tissue>Seedling</tissue>
    </source>
</reference>
<reference key="10">
    <citation type="journal article" date="2008" name="Trends Plant Sci.">
        <title>Plant ABC proteins - a unified nomenclature and updated inventory.</title>
        <authorList>
            <person name="Verrier P.J."/>
            <person name="Bird D."/>
            <person name="Burla B."/>
            <person name="Dassa E."/>
            <person name="Forestier C."/>
            <person name="Geisler M."/>
            <person name="Klein M."/>
            <person name="Kolukisaoglu H.U."/>
            <person name="Lee Y."/>
            <person name="Martinoia E."/>
            <person name="Murphy A."/>
            <person name="Rea P.A."/>
            <person name="Samuels L."/>
            <person name="Schulz B."/>
            <person name="Spalding E.J."/>
            <person name="Yazaki K."/>
            <person name="Theodoulou F.L."/>
        </authorList>
    </citation>
    <scope>GENE FAMILY</scope>
    <scope>NOMENCLATURE</scope>
</reference>
<reference key="11">
    <citation type="journal article" date="2009" name="J. Proteomics">
        <title>Phosphoproteomic analysis of nuclei-enriched fractions from Arabidopsis thaliana.</title>
        <authorList>
            <person name="Jones A.M.E."/>
            <person name="MacLean D."/>
            <person name="Studholme D.J."/>
            <person name="Serna-Sanz A."/>
            <person name="Andreasson E."/>
            <person name="Rathjen J.P."/>
            <person name="Peck S.C."/>
        </authorList>
    </citation>
    <scope>IDENTIFICATION BY MASS SPECTROMETRY [LARGE SCALE ANALYSIS]</scope>
    <source>
        <strain>cv. Columbia</strain>
    </source>
</reference>
<reference key="12">
    <citation type="journal article" date="2009" name="Plant Physiol.">
        <title>Large-scale Arabidopsis phosphoproteome profiling reveals novel chloroplast kinase substrates and phosphorylation networks.</title>
        <authorList>
            <person name="Reiland S."/>
            <person name="Messerli G."/>
            <person name="Baerenfaller K."/>
            <person name="Gerrits B."/>
            <person name="Endler A."/>
            <person name="Grossmann J."/>
            <person name="Gruissem W."/>
            <person name="Baginsky S."/>
        </authorList>
    </citation>
    <scope>IDENTIFICATION BY MASS SPECTROMETRY [LARGE SCALE ANALYSIS]</scope>
</reference>
<reference key="13">
    <citation type="journal article" date="2019" name="PLoS Genet.">
        <title>Connective auxin transport contributes to strigolactone-mediated shoot branching control independent of the transcription factor BRC1.</title>
        <authorList>
            <person name="van Rongen M."/>
            <person name="Bennett T."/>
            <person name="Ticchiarelli F."/>
            <person name="Leyser O."/>
        </authorList>
    </citation>
    <scope>FUNCTION</scope>
    <scope>DISRUPTION PHENOTYPE</scope>
    <scope>TISSUE SPECIFICITY</scope>
    <source>
        <strain>cv. Columbia</strain>
    </source>
</reference>
<reference key="14">
    <citation type="journal article" date="2020" name="Plant Physiol.">
        <title>An ATP-binding cassette transporter, ABCB19, regulates leaf position and morphology during phototropin1-mediated blue light responses.</title>
        <authorList>
            <person name="Jenness M.K."/>
            <person name="Tayengwa R."/>
            <person name="Murphy A.S."/>
        </authorList>
    </citation>
    <scope>FUNCTION</scope>
    <scope>DISRUPTION PHENOTYPE</scope>
    <scope>PHOSPHORYLATION BY PHOT1</scope>
    <scope>TRANSPORTER ACTIVITY</scope>
    <source>
        <strain>cv. Columbia</strain>
        <strain>cv. Columbia GL1</strain>
    </source>
</reference>
<reference key="15">
    <citation type="journal article" date="2022" name="Front. Plant Sci.">
        <title>Loss of multiple ABCB auxin transporters recapitulates the major twisted dwarf 1 phenotypes in Arabidopsis thaliana.</title>
        <authorList>
            <person name="Jenness M.K."/>
            <person name="Tayengwa R."/>
            <person name="Bate G.A."/>
            <person name="Tapken W."/>
            <person name="Zhang Y."/>
            <person name="Pang C."/>
            <person name="Murphy A.S."/>
        </authorList>
    </citation>
    <scope>FUNCTION</scope>
    <scope>DISRUPTION PHENOTYPE</scope>
    <scope>TISSUE SPECIFICITY</scope>
    <source>
        <strain>cv. Columbia</strain>
    </source>
</reference>
<reference key="16">
    <citation type="journal article" date="2022" name="J. Exp. Bot.">
        <title>Arabidopsis TWISTED DWARF1 regulates stamen elongation by differential activation of ABCB1,19-mediated auxin transport.</title>
        <authorList>
            <person name="Liu J."/>
            <person name="Ghelli R."/>
            <person name="Cardarelli M."/>
            <person name="Geisler M."/>
        </authorList>
    </citation>
    <scope>FUNCTION</scope>
    <scope>DISRUPTION PHENOTYPE</scope>
    <scope>ACTIVITY REGULATION</scope>
    <source>
        <strain>cv. Columbia</strain>
    </source>
</reference>
<reference key="17">
    <citation type="journal article" date="2024" name="Quant. Plant Biol.">
        <title>Quantitative analysis of the root posture of Arabidopsis thaliana mutants with wavy roots.</title>
        <authorList>
            <person name="Yagi H."/>
            <person name="Hara-Nishimura I."/>
            <person name="Ueda H."/>
        </authorList>
    </citation>
    <scope>FUNCTION</scope>
    <scope>DISRUPTION PHENOTYPE</scope>
    <source>
        <strain>cv. Columbia</strain>
    </source>
</reference>
<reference key="18">
    <citation type="journal article" date="2024" name="Trends Plant Sci.">
        <title>ABCB19 transporter: fostering brassinosteroid transport through membrane flexibility.</title>
        <authorList>
            <person name="Mahmood S."/>
            <person name="Singh I.K."/>
            <person name="Singh A."/>
        </authorList>
    </citation>
    <scope>FUNCTION</scope>
</reference>
<reference key="19">
    <citation type="journal article" date="2025" name="Plant Commun.">
        <title>Structural insights into brassinosteroid export mediated by the Arabidopsis ABC transporter ABCB1.</title>
        <authorList>
            <person name="Wei H."/>
            <person name="Zhu H."/>
            <person name="Ying W."/>
            <person name="Janssens H."/>
            <person name="Kvasnica M."/>
            <person name="Winne J.M."/>
            <person name="Gao Y."/>
            <person name="Friml J."/>
            <person name="Ma Q."/>
            <person name="Tan S."/>
            <person name="Liu X."/>
            <person name="Russinova E."/>
            <person name="Sun L."/>
        </authorList>
    </citation>
    <scope>FUNCTION</scope>
    <scope>DISRUPTION PHENOTYPE</scope>
    <scope>BIOPHYSICOCHEMICAL PROPERTIES</scope>
    <scope>TRANSPORTER ACTIVITY</scope>
    <source>
        <strain>cv. Columbia</strain>
    </source>
</reference>
<reference evidence="30 31 32 33" key="20">
    <citation type="journal article" date="2024" name="Science">
        <title>Structure and function of the Arabidopsis ABC transporter ABCB19 in brassinosteroid export.</title>
        <authorList>
            <person name="Ying W."/>
            <person name="Wang Y."/>
            <person name="Wei H."/>
            <person name="Luo Y."/>
            <person name="Ma Q."/>
            <person name="Zhu H."/>
            <person name="Janssens H."/>
            <person name="Vukasinovic N."/>
            <person name="Kvasnica M."/>
            <person name="Winne J.M."/>
            <person name="Gao Y."/>
            <person name="Tan S."/>
            <person name="Friml J."/>
            <person name="Liu X."/>
            <person name="Russinova E."/>
            <person name="Sun L."/>
        </authorList>
    </citation>
    <scope>STRUCTURE BY ELECTRON MICROSCOPY (3.40 ANGSTROMS) OF APOENZYME AND COMPLEXES WITH ATP; ANP AND BRASSINOLIDE</scope>
    <scope>FUNCTION</scope>
    <scope>DISRUPTION PHENOTYPE</scope>
    <scope>MUTAGENESIS OF PHE-59; PHE-62; TYR-276; TRP-283; PHE-309; ILE-312; MET-316; GLU-529; PHE-704; PHE-953; VAL-957; ILE-958 AND GLU-1174</scope>
    <scope>TRANSPORTER ACTIVITY</scope>
    <scope>BIOPHYSICOCHEMICAL PROPERTIES</scope>
    <scope>INDUCTION BY BRASSINOSTEROIDS</scope>
    <scope>ACTIVITY REGULATION</scope>
    <source>
        <strain>cv. Columbia</strain>
    </source>
</reference>
<comment type="function">
    <text evidence="7 8 9 11 12 13 14 15 16 17 18">Brassinosteroid exporter that, in conjunction with ABCB1, supports the accumulation of exogenous brassinosteroids (BR) in the apoplast, thus promoting BR signaling initiation involving the specific receptor BRI1 and required for plant growth and stress responses (PubMed:38513023, PubMed:38944596, PubMed:39497419). Mediates the transport of castasterone (CSA) and brassinolide (BL) across the plasma membrane (PubMed:38513023). Auxin efflux transporter that acts as a negative regulator of light signaling to promote hypocotyl elongation by mediating leaf tip to petiole auxin flux (PubMed:32855213, PubMed:38513023). Required for the regulation of leaf position and morphology during PHOT1-mediated blue light responses involving auxin distribution, especially in low light fluence (PubMed:32855213, PubMed:35528937). Together with ABCB1 and in a FKBP42/TWD1-dependent manner, supports seed development by promoting stamen elongation and, to a lesser extent, anther dehiscence and pollen maturation, probably as auxin transporters (PubMed:35512423, PubMed:35528937). Contributes to the connective auxin transport (CAT) that ensures communication across the shoot system, including auxin loading at axillary bud apices to influence strigolactone-mediated bud outgrowth responses and shoot branching control (PubMed:30865619). Mediates the accumulation of chlorophyll and anthocyanin, as well as the expression of genes in response to light. Participates in auxin efflux and thus regulates the polar auxin basipetal transport (from auxin-producing leaves to auxin-sensitive tissues, and from root tips to root elongating zone). Involved in diverse auxin-mediated responses including gravitropism, phototropism and lateral root formation. Required for the regulation of organ bending, such as gravitropic root bending (PubMed:39777035).</text>
</comment>
<comment type="catalytic activity">
    <reaction evidence="12">
        <text>(indol-3-yl)acetate(in) + ATP + H2O = (indol-3-yl)acetate(out) + ADP + phosphate + H(+)</text>
        <dbReference type="Rhea" id="RHEA:84235"/>
        <dbReference type="ChEBI" id="CHEBI:15377"/>
        <dbReference type="ChEBI" id="CHEBI:15378"/>
        <dbReference type="ChEBI" id="CHEBI:30616"/>
        <dbReference type="ChEBI" id="CHEBI:30854"/>
        <dbReference type="ChEBI" id="CHEBI:43474"/>
        <dbReference type="ChEBI" id="CHEBI:456216"/>
    </reaction>
    <physiologicalReaction direction="left-to-right" evidence="12">
        <dbReference type="Rhea" id="RHEA:84236"/>
    </physiologicalReaction>
</comment>
<comment type="catalytic activity">
    <reaction evidence="15 17">
        <text>brassinolide(in) + ATP + H2O = brassinolide(out) + ADP + phosphate + H(+)</text>
        <dbReference type="Rhea" id="RHEA:84239"/>
        <dbReference type="ChEBI" id="CHEBI:15377"/>
        <dbReference type="ChEBI" id="CHEBI:15378"/>
        <dbReference type="ChEBI" id="CHEBI:28277"/>
        <dbReference type="ChEBI" id="CHEBI:30616"/>
        <dbReference type="ChEBI" id="CHEBI:43474"/>
        <dbReference type="ChEBI" id="CHEBI:456216"/>
    </reaction>
    <physiologicalReaction direction="left-to-right" evidence="15 17">
        <dbReference type="Rhea" id="RHEA:84240"/>
    </physiologicalReaction>
</comment>
<comment type="catalytic activity">
    <reaction evidence="17">
        <text>24-epi-brassinolide(in) + ATP + H2O = 24-epi-brassinolide(out) + ADP + phosphate + H(+)</text>
        <dbReference type="Rhea" id="RHEA:84263"/>
        <dbReference type="ChEBI" id="CHEBI:15377"/>
        <dbReference type="ChEBI" id="CHEBI:15378"/>
        <dbReference type="ChEBI" id="CHEBI:27722"/>
        <dbReference type="ChEBI" id="CHEBI:30616"/>
        <dbReference type="ChEBI" id="CHEBI:43474"/>
        <dbReference type="ChEBI" id="CHEBI:456216"/>
    </reaction>
    <physiologicalReaction direction="left-to-right" evidence="17">
        <dbReference type="Rhea" id="RHEA:84264"/>
    </physiologicalReaction>
</comment>
<comment type="catalytic activity">
    <reaction evidence="17">
        <text>24-epi-castasterone(in) + ATP + H2O = 24-epi-castasterone(out) + ADP + phosphate + H(+)</text>
        <dbReference type="Rhea" id="RHEA:84267"/>
        <dbReference type="ChEBI" id="CHEBI:15377"/>
        <dbReference type="ChEBI" id="CHEBI:15378"/>
        <dbReference type="ChEBI" id="CHEBI:30616"/>
        <dbReference type="ChEBI" id="CHEBI:43474"/>
        <dbReference type="ChEBI" id="CHEBI:233658"/>
        <dbReference type="ChEBI" id="CHEBI:456216"/>
    </reaction>
    <physiologicalReaction direction="left-to-right" evidence="17">
        <dbReference type="Rhea" id="RHEA:84268"/>
    </physiologicalReaction>
</comment>
<comment type="catalytic activity">
    <reaction evidence="15 17">
        <text>castasterone(in) + ATP + H2O = castasterone(out) + ADP + phosphate + H(+)</text>
        <dbReference type="Rhea" id="RHEA:84271"/>
        <dbReference type="ChEBI" id="CHEBI:15377"/>
        <dbReference type="ChEBI" id="CHEBI:15378"/>
        <dbReference type="ChEBI" id="CHEBI:23051"/>
        <dbReference type="ChEBI" id="CHEBI:30616"/>
        <dbReference type="ChEBI" id="CHEBI:43474"/>
        <dbReference type="ChEBI" id="CHEBI:456216"/>
    </reaction>
    <physiologicalReaction direction="left-to-right" evidence="15 17">
        <dbReference type="Rhea" id="RHEA:84272"/>
    </physiologicalReaction>
</comment>
<comment type="activity regulation">
    <text evidence="13 15">Transport capacity is stimulated by the chaperone protein FKBP42/TWD1 (PubMed:35512423). ATPase activity is specifically activated by bioactive brassinosteroids in a dose-dependent manner, including brassinolide (BL), 24-epiBL and 24-epicastasterone (24-epiCS) (PubMed:38513023). Inhibited by vanadate (PubMed:38513023).</text>
</comment>
<comment type="biophysicochemical properties">
    <kinetics>
        <Vmax evidence="15">29.6 nmol/min/mg enzyme with ATP as substrate (in the absence of brassinolide)</Vmax>
        <Vmax evidence="15 17">133.5 nmol/min/mg enzyme with ATP as substrate (in the presence of brassinolide)</Vmax>
        <Vmax evidence="17">107.3 nmol/min/mg enzyme with ATP as substrate (in the presence of 24-epibrassinolide)</Vmax>
        <Vmax evidence="17">126.2 nmol/min/mg enzyme with ATP as substrate (in the presence of 24-epicastasterone)</Vmax>
    </kinetics>
</comment>
<comment type="subunit">
    <text evidence="7 8 10">Interacts with 1-naphthylphthalamic acid (NPA), and FKBP42/TWD1.</text>
</comment>
<comment type="interaction">
    <interactant intactId="EBI-371791">
        <id>Q9LJX0</id>
    </interactant>
    <interactant intactId="EBI-1541799">
        <id>Q9C6B8</id>
        <label>PIN1</label>
    </interactant>
    <organismsDiffer>false</organismsDiffer>
    <experiments>7</experiments>
</comment>
<comment type="subcellular location">
    <subcellularLocation>
        <location evidence="1">Cell membrane</location>
        <topology evidence="2">Multi-pass membrane protein</topology>
    </subcellularLocation>
</comment>
<comment type="tissue specificity">
    <text evidence="7 11 14">Ubiquitous, mostly in shoot meristems (PubMed:11701880). Present in the majority of stem cells, predominantly in a non-polar manner (PubMed:30865619). Accumulates in seedlings roots and hypocotyls, and in roots apices and inflorescences (PubMed:35528937).</text>
</comment>
<comment type="developmental stage">
    <text evidence="7 13">In seedlings, confined to hypocotyls in darkness, but expressed in all tissues except in hypocotyls in light (PubMed:11701880). In flowers, present in all organs except petals (PubMed:11701880). During stamen development, accumulates strongly in the stamen filament in both epidermal and provascular cells, especially at the tip of the stamen filament (at protein level) (PubMed:35512423).</text>
</comment>
<comment type="induction">
    <text evidence="7 9 15">By auxin (IAA). Induced by red light, but repressed by far-red light (PubMed:11701880, PubMed:15908594). Induced by brassinosteroids (at protein level) (PubMed:38513023).</text>
</comment>
<comment type="PTM">
    <text evidence="12">Phosphorylated by PHOT1 in phototropic seedlings, to modulates auxin export and distribution and regulates leaf and petiole curling.</text>
</comment>
<comment type="disruption phenotype">
    <text evidence="11 12 13 14 15 17 18">Reduced rosette size associated with decreased brassinosteroid signaling (PubMed:38513023). Reduced sensitivity to red and blue light-mediated leaf positioning and morphology associated with reduced auxin efflux, thus leading to constitutive upright petiole angles, and irregularly wavy and small rosette leaves (PubMed:32855213). Aberrantly enhanced organ bending, including increased gravitropic root bending (PubMed:39777035). Reduction in bulk stem auxin transport and lower levels of shoot branching as well as small increase in branch angle when combined with the disruption of MAX2 and MAX4, genes involved in strigolactone-mediated signaling (PubMed:30865619). The abcb19 pin3 pin4 pin7 quadruple mutant exhibits an additive phenotype on strigolactone-mediated bud outgrowth responses and shoot branching control (PubMed:30865619). Partial restoration of the increased shoot branching observed in the brc1 brc2 double mutant (PubMed:30865619). In addition, the triple mutant brc1 brc2 abcb19 is insensitive to strigolactone (e.g. GR24) treatment (PubMed:30865619). The abcb1 abcb19 double mutant is severely dwarfed, with excessive leaf and petiole curling, reduced internode lengths, increased stem and silique waving and skewing, and exhibits poor flower fertility due to short stamen filaments not sufficiently elongated to position the anthers above the stigma during anthesis; this phenotype is associated with lower free auxin levels in blue light and reduced length of epidermal cells in the middle of stamen (PubMed:35512423, PubMed:35528937). The double mutant abcb1 abcb19 is also deficient in brassinosteroid export and is insensitive to brassinolide and its biosynthetic precursor 22-hydroxycampesterol, resulting in decreased brassinosteroid signaling; this phenotype is restored by bikinin (BIK) treatment, which can activate brassinosteroid signaling downstream of the BRI1 receptor (PubMed:38513023, PubMed:39497419). The xif xik abcb19 triple mutant has a stronger bending phenotype than the single mutant (PubMed:39777035).</text>
</comment>
<comment type="similarity">
    <text evidence="6">Belongs to the ABC transporter superfamily. ABCB family. Multidrug resistance exporter (TC 3.A.1.201) subfamily.</text>
</comment>
<evidence type="ECO:0000250" key="1">
    <source>
        <dbReference type="UniProtKB" id="Q9ZR72"/>
    </source>
</evidence>
<evidence type="ECO:0000255" key="2"/>
<evidence type="ECO:0000255" key="3">
    <source>
        <dbReference type="PROSITE-ProRule" id="PRU00434"/>
    </source>
</evidence>
<evidence type="ECO:0000255" key="4">
    <source>
        <dbReference type="PROSITE-ProRule" id="PRU00441"/>
    </source>
</evidence>
<evidence type="ECO:0000255" key="5">
    <source>
        <dbReference type="PROSITE-ProRule" id="PRU00498"/>
    </source>
</evidence>
<evidence type="ECO:0000255" key="6">
    <source>
        <dbReference type="PROSITE-ProRule" id="PRU01700"/>
    </source>
</evidence>
<evidence type="ECO:0000269" key="7">
    <source>
    </source>
</evidence>
<evidence type="ECO:0000269" key="8">
    <source>
    </source>
</evidence>
<evidence type="ECO:0000269" key="9">
    <source>
    </source>
</evidence>
<evidence type="ECO:0000269" key="10">
    <source>
    </source>
</evidence>
<evidence type="ECO:0000269" key="11">
    <source>
    </source>
</evidence>
<evidence type="ECO:0000269" key="12">
    <source>
    </source>
</evidence>
<evidence type="ECO:0000269" key="13">
    <source>
    </source>
</evidence>
<evidence type="ECO:0000269" key="14">
    <source>
    </source>
</evidence>
<evidence type="ECO:0000269" key="15">
    <source>
    </source>
</evidence>
<evidence type="ECO:0000269" key="16">
    <source>
    </source>
</evidence>
<evidence type="ECO:0000269" key="17">
    <source>
    </source>
</evidence>
<evidence type="ECO:0000269" key="18">
    <source>
    </source>
</evidence>
<evidence type="ECO:0000303" key="19">
    <source>
    </source>
</evidence>
<evidence type="ECO:0000303" key="20">
    <source>
    </source>
</evidence>
<evidence type="ECO:0000303" key="21">
    <source>
    </source>
</evidence>
<evidence type="ECO:0000303" key="22">
    <source>
    </source>
</evidence>
<evidence type="ECO:0000303" key="23">
    <source>
    </source>
</evidence>
<evidence type="ECO:0000305" key="24"/>
<evidence type="ECO:0000305" key="25">
    <source>
    </source>
</evidence>
<evidence type="ECO:0000305" key="26">
    <source>
    </source>
</evidence>
<evidence type="ECO:0000305" key="27">
    <source>
    </source>
</evidence>
<evidence type="ECO:0000312" key="28">
    <source>
        <dbReference type="Araport" id="AT3G28860"/>
    </source>
</evidence>
<evidence type="ECO:0000312" key="29">
    <source>
        <dbReference type="EMBL" id="BAB02129.1"/>
    </source>
</evidence>
<evidence type="ECO:0007744" key="30">
    <source>
        <dbReference type="PDB" id="8WOI"/>
    </source>
</evidence>
<evidence type="ECO:0007744" key="31">
    <source>
        <dbReference type="PDB" id="8WOM"/>
    </source>
</evidence>
<evidence type="ECO:0007744" key="32">
    <source>
        <dbReference type="PDB" id="8WOO"/>
    </source>
</evidence>
<evidence type="ECO:0007744" key="33">
    <source>
        <dbReference type="PDB" id="8WP0"/>
    </source>
</evidence>
<evidence type="ECO:0007829" key="34">
    <source>
        <dbReference type="PDB" id="8WOI"/>
    </source>
</evidence>
<evidence type="ECO:0007829" key="35">
    <source>
        <dbReference type="PDB" id="8WOM"/>
    </source>
</evidence>
<evidence type="ECO:0007829" key="36">
    <source>
        <dbReference type="PDB" id="8WP0"/>
    </source>
</evidence>
<proteinExistence type="evidence at protein level"/>
<accession>Q9LJX0</accession>
<accession>Q8GZ77</accession>
<accession>Q8H6F5</accession>
<gene>
    <name evidence="23" type="primary">ABCB19</name>
    <name evidence="20 21" type="synonym">MDR1</name>
    <name evidence="19 20" type="synonym">MDR11</name>
    <name evidence="21 22" type="synonym">PGP19</name>
    <name evidence="28" type="ordered locus">At3g28860</name>
    <name evidence="29" type="ORF">MLD15.2</name>
</gene>
<sequence length="1252" mass="136788">MSETNTTDAKTVPAEAEKKKEQSLPFFKLFSFADKFDYLLMFVGSLGAIVHGSSMPVFFLLFGQMVNGFGKNQMDLHQMVHEVSRYSLYFVYLGLVVCFSSYAEIACWMYSGERQVAALRKKYLEAVLKQDVGFFDTDARTGDIVFSVSTDTLLVQDAISEKVGNFIHYLSTFLAGLVVGFVSAWKLALLSVAVIPGIAFAGGLYAYTLTGITSKSRESYANAGVIAEQAIAQVRTVYSYVGESKALNAYSDAIQYTLKLGYKAGMAKGLGLGCTYGIACMSWALVFWYAGVFIRNGQTDGGKAFTAIFSAIVGGMSLGQSFSNLGAFSKGKAAGYKLMEIINQRPTIIQDPLDGKCLDQVHGNIEFKDVTFSYPSRPDVMIFRNFNIFFPSGKTVAVVGGSGSGKSTVVSLIERFYDPNSGQILLDGVEIKTLQLKFLREQIGLVNQEPALFATTILENILYGKPDATMVEVEAAASAANAHSFITLLPKGYDTQVGERGVQLSGGQKQRIAIARAMLKDPKILLLDEATSALDASSESIVQEALDRVMVGRTTVVVAHRLCTIRNVDSIAVIQQGQVVETGTHEELIAKSGAYASLIRFQEMVGTRDFSNPSTRRTRSTRLSHSLSTKSLSLRSGSLRNLSYSYSTGADGRIEMISNAETDRKTRAPENYFYRLLKLNSPEWPYSIMGAVGSILSGFIGPTFAIVMSNMIEVFYYTDYDSMERKTKEYVFIYIGAGLYAVGAYLIQHYFFSIMGENLTTRVRRMMLSAILRNEVGWFDEDEHNSSLIAARLATDAADVKSAIAERISVILQNMTSLLTSFIVAFIVEWRVSLLILGTFPLLVLANFAQQLSLKGFAGDTAKAHAKTSMIAGEGVSNIRTVAAFNAQSKILSLFCHELRVPQKRSLYRSQTSGFLFGLSQLALYGSEALILWYGAHLVSKGVSTFSKVIKVFVVLVITANSVAETVSLAPEIIRGGEAVGSVFSVLDRQTRIDPDDADADPVETIRGDIEFRHVDFAYPSRPDVMVFRDFNLRIRAGHSQALVGASGSGKSSVIAMIERFYDPLAGKVMIDGKDIRRLNLKSLRLKIGLVQQEPALFAATIFDNIAYGKDGATESEVIDAARAANAHGFISGLPEGYKTPVGERGVQLSGGQKQRIAIARAVLKNPTVLLLDEATSALDAESECVLQEALERLMRGRTTVVVAHRLSTIRGVDCIGVIQDGRIVEQGSHSELVSRPEGAYSRLLQLQTHRI</sequence>
<keyword id="KW-0002">3D-structure</keyword>
<keyword id="KW-0067">ATP-binding</keyword>
<keyword id="KW-0927">Auxin signaling pathway</keyword>
<keyword id="KW-1070">Brassinosteroid signaling pathway</keyword>
<keyword id="KW-1003">Cell membrane</keyword>
<keyword id="KW-0903">Direct protein sequencing</keyword>
<keyword id="KW-0325">Glycoprotein</keyword>
<keyword id="KW-0472">Membrane</keyword>
<keyword id="KW-0547">Nucleotide-binding</keyword>
<keyword id="KW-1185">Reference proteome</keyword>
<keyword id="KW-0677">Repeat</keyword>
<keyword id="KW-0812">Transmembrane</keyword>
<keyword id="KW-1133">Transmembrane helix</keyword>
<keyword id="KW-0813">Transport</keyword>
<protein>
    <recommendedName>
        <fullName evidence="23">ABC transporter B family member 19</fullName>
        <shortName evidence="23">ABC transporter ABCB.19</shortName>
        <shortName evidence="23">AtABCB19</shortName>
    </recommendedName>
    <alternativeName>
        <fullName evidence="25">Auxin exporter ABCB19</fullName>
    </alternativeName>
    <alternativeName>
        <fullName evidence="27">Brassinosteroid exporter ABCB19</fullName>
    </alternativeName>
    <alternativeName>
        <fullName evidence="19 20">Multidrug resistance protein 11</fullName>
        <shortName evidence="19 20">AtMDR11</shortName>
    </alternativeName>
    <alternativeName>
        <fullName evidence="21 22">P-glycoprotein 19</fullName>
        <shortName evidence="21">AtPGP19</shortName>
    </alternativeName>
</protein>
<feature type="chain" id="PRO_0000227922" description="ABC transporter B family member 19">
    <location>
        <begin position="1"/>
        <end position="1252"/>
    </location>
</feature>
<feature type="transmembrane region" description="Helical" evidence="4">
    <location>
        <begin position="42"/>
        <end position="62"/>
    </location>
</feature>
<feature type="transmembrane region" description="Helical" evidence="4">
    <location>
        <begin position="88"/>
        <end position="108"/>
    </location>
</feature>
<feature type="transmembrane region" description="Helical" evidence="4">
    <location>
        <begin position="163"/>
        <end position="183"/>
    </location>
</feature>
<feature type="transmembrane region" description="Helical" evidence="4">
    <location>
        <begin position="187"/>
        <end position="207"/>
    </location>
</feature>
<feature type="transmembrane region" description="Helical" evidence="4">
    <location>
        <begin position="274"/>
        <end position="294"/>
    </location>
</feature>
<feature type="transmembrane region" description="Helical" evidence="4">
    <location>
        <begin position="308"/>
        <end position="328"/>
    </location>
</feature>
<feature type="transmembrane region" description="Helical" evidence="4">
    <location>
        <begin position="688"/>
        <end position="708"/>
    </location>
</feature>
<feature type="transmembrane region" description="Helical" evidence="4">
    <location>
        <begin position="732"/>
        <end position="752"/>
    </location>
</feature>
<feature type="transmembrane region" description="Helical" evidence="4">
    <location>
        <begin position="822"/>
        <end position="842"/>
    </location>
</feature>
<feature type="transmembrane region" description="Helical" evidence="4">
    <location>
        <begin position="914"/>
        <end position="934"/>
    </location>
</feature>
<feature type="transmembrane region" description="Helical" evidence="4">
    <location>
        <begin position="949"/>
        <end position="969"/>
    </location>
</feature>
<feature type="domain" description="ABC transmembrane type-1 1" evidence="4">
    <location>
        <begin position="41"/>
        <end position="330"/>
    </location>
</feature>
<feature type="domain" description="ABC transporter 1" evidence="3">
    <location>
        <begin position="365"/>
        <end position="601"/>
    </location>
</feature>
<feature type="domain" description="ABC transmembrane type-1 2" evidence="4">
    <location>
        <begin position="687"/>
        <end position="975"/>
    </location>
</feature>
<feature type="domain" description="ABC transporter 2" evidence="3">
    <location>
        <begin position="1010"/>
        <end position="1246"/>
    </location>
</feature>
<feature type="region of interest" description="Interaction with FKBP42/TWD1">
    <location>
        <begin position="965"/>
        <end position="1252"/>
    </location>
</feature>
<feature type="binding site" evidence="15 32 33">
    <location>
        <position position="136"/>
    </location>
    <ligand>
        <name>ATP</name>
        <dbReference type="ChEBI" id="CHEBI:30616"/>
        <label>1</label>
    </ligand>
</feature>
<feature type="binding site" evidence="15 31">
    <location>
        <position position="276"/>
    </location>
    <ligand>
        <name>brassinolide</name>
        <dbReference type="ChEBI" id="CHEBI:28277"/>
    </ligand>
</feature>
<feature type="binding site" evidence="15 31">
    <location>
        <position position="283"/>
    </location>
    <ligand>
        <name>brassinolide</name>
        <dbReference type="ChEBI" id="CHEBI:28277"/>
    </ligand>
</feature>
<feature type="binding site" evidence="15 32 33">
    <location>
        <position position="374"/>
    </location>
    <ligand>
        <name>ATP</name>
        <dbReference type="ChEBI" id="CHEBI:30616"/>
        <label>1</label>
    </ligand>
</feature>
<feature type="binding site" evidence="15 33">
    <location>
        <position position="376"/>
    </location>
    <ligand>
        <name>ATP</name>
        <dbReference type="ChEBI" id="CHEBI:30616"/>
        <label>1</label>
    </ligand>
</feature>
<feature type="binding site" evidence="26 32">
    <location>
        <position position="405"/>
    </location>
    <ligand>
        <name>ATP</name>
        <dbReference type="ChEBI" id="CHEBI:30616"/>
        <label>1</label>
    </ligand>
</feature>
<feature type="binding site" evidence="15 32 33">
    <location>
        <position position="406"/>
    </location>
    <ligand>
        <name>ATP</name>
        <dbReference type="ChEBI" id="CHEBI:30616"/>
        <label>1</label>
    </ligand>
</feature>
<feature type="binding site" evidence="15 32 33">
    <location>
        <position position="407"/>
    </location>
    <ligand>
        <name>ATP</name>
        <dbReference type="ChEBI" id="CHEBI:30616"/>
        <label>1</label>
    </ligand>
</feature>
<feature type="binding site" evidence="26 32">
    <location>
        <position position="408"/>
    </location>
    <ligand>
        <name>ATP</name>
        <dbReference type="ChEBI" id="CHEBI:30616"/>
        <label>1</label>
    </ligand>
</feature>
<feature type="binding site" evidence="15 33">
    <location>
        <position position="529"/>
    </location>
    <ligand>
        <name>ATP</name>
        <dbReference type="ChEBI" id="CHEBI:30616"/>
        <label>1</label>
    </ligand>
</feature>
<feature type="binding site" evidence="26 32">
    <location>
        <position position="780"/>
    </location>
    <ligand>
        <name>ATP</name>
        <dbReference type="ChEBI" id="CHEBI:30616"/>
        <label>2</label>
    </ligand>
</feature>
<feature type="binding site" evidence="15 32 33">
    <location>
        <position position="1019"/>
    </location>
    <ligand>
        <name>ATP</name>
        <dbReference type="ChEBI" id="CHEBI:30616"/>
        <label>2</label>
    </ligand>
</feature>
<feature type="binding site" evidence="26 32">
    <location>
        <position position="1021"/>
    </location>
    <ligand>
        <name>ATP</name>
        <dbReference type="ChEBI" id="CHEBI:30616"/>
        <label>2</label>
    </ligand>
</feature>
<feature type="binding site" evidence="26 32">
    <location>
        <position position="1022"/>
    </location>
    <ligand>
        <name>ATP</name>
        <dbReference type="ChEBI" id="CHEBI:30616"/>
        <label>2</label>
    </ligand>
</feature>
<feature type="binding site" evidence="15 32 33">
    <location>
        <position position="1051"/>
    </location>
    <ligand>
        <name>ATP</name>
        <dbReference type="ChEBI" id="CHEBI:30616"/>
        <label>2</label>
    </ligand>
</feature>
<feature type="binding site" evidence="15 32 33">
    <location>
        <position position="1052"/>
    </location>
    <ligand>
        <name>ATP</name>
        <dbReference type="ChEBI" id="CHEBI:30616"/>
        <label>2</label>
    </ligand>
</feature>
<feature type="binding site" evidence="26 32 33">
    <location>
        <position position="1053"/>
    </location>
    <ligand>
        <name>ATP</name>
        <dbReference type="ChEBI" id="CHEBI:30616"/>
        <label>2</label>
    </ligand>
</feature>
<feature type="glycosylation site" description="N-linked (GlcNAc...) asparagine" evidence="5">
    <location>
        <position position="5"/>
    </location>
</feature>
<feature type="glycosylation site" description="N-linked (GlcNAc...) asparagine" evidence="5">
    <location>
        <position position="641"/>
    </location>
</feature>
<feature type="glycosylation site" description="N-linked (GlcNAc...) asparagine" evidence="5">
    <location>
        <position position="758"/>
    </location>
</feature>
<feature type="glycosylation site" description="N-linked (GlcNAc...) asparagine" evidence="5">
    <location>
        <position position="785"/>
    </location>
</feature>
<feature type="glycosylation site" description="N-linked (GlcNAc...) asparagine" evidence="5">
    <location>
        <position position="814"/>
    </location>
</feature>
<feature type="mutagenesis site" description="Impaired brassinosteroid exporter activity, but normal ATPase activity and slightly reduced activity stimulation by brassinolide." evidence="15">
    <original>F</original>
    <variation>A</variation>
    <location>
        <position position="59"/>
    </location>
</feature>
<feature type="mutagenesis site" description="Strongly reduced ATPase activity and lost activity stimulation by brassinolide." evidence="15">
    <original>F</original>
    <variation>A</variation>
    <location>
        <position position="62"/>
    </location>
</feature>
<feature type="mutagenesis site" description="Impaired brassinosteroid exporter activity, but normal ATPase activity and slightly reduced activity stimulation by brassinolide." evidence="15">
    <original>Y</original>
    <variation>A</variation>
    <location>
        <position position="276"/>
    </location>
</feature>
<feature type="mutagenesis site" description="Strongly reduced ATPase activity and lost activity stimulation by brassinolide." evidence="15">
    <original>W</original>
    <variation>A</variation>
    <location>
        <position position="283"/>
    </location>
</feature>
<feature type="mutagenesis site" description="Increased ATPase activity and enhanced activity stimulation by brassinolide, but reduced brassinosteroid exporter activity." evidence="15">
    <original>F</original>
    <variation>A</variation>
    <location>
        <position position="309"/>
    </location>
</feature>
<feature type="mutagenesis site" description="Strongly reduced ATPase activity and reduced activity stimulation by brassinolide." evidence="15">
    <original>I</original>
    <variation>A</variation>
    <location>
        <position position="312"/>
    </location>
</feature>
<feature type="mutagenesis site" description="Strongly reduced ATPase activity and reduced activity stimulation by brassinolide." evidence="15">
    <original>M</original>
    <variation>A</variation>
    <location>
        <position position="316"/>
    </location>
</feature>
<feature type="mutagenesis site" description="Lost ATPase activity and reduced brassinosteroid export; when associated with Q-1174." evidence="15">
    <original>E</original>
    <variation>Q</variation>
    <location>
        <position position="529"/>
    </location>
</feature>
<feature type="mutagenesis site" description="Impaired brassinosteroid exporter activity, reduced brassinosteroid exporter activity, but normal ATPase activity and normal activity stimulation by brassinolide." evidence="15">
    <original>F</original>
    <variation>A</variation>
    <location>
        <position position="704"/>
    </location>
</feature>
<feature type="mutagenesis site" description="Strongly reduced ATPase activity and lost activity stimulation by brassinolide." evidence="15">
    <original>F</original>
    <variation>A</variation>
    <location>
        <position position="953"/>
    </location>
</feature>
<feature type="mutagenesis site" description="Normal ATPase activity and activity stimulation by brassinolide." evidence="15">
    <original>V</original>
    <variation>A</variation>
    <location>
        <position position="957"/>
    </location>
</feature>
<feature type="mutagenesis site" description="Strongly reduced ATPase activity and lost activity stimulation by brassinolide." evidence="15">
    <original>I</original>
    <variation>A</variation>
    <location>
        <position position="958"/>
    </location>
</feature>
<feature type="mutagenesis site" description="Lost ATPase activity and reduced brassinosteroid export; when associated with Q-1174." evidence="15">
    <original>E</original>
    <variation>Q</variation>
    <location>
        <position position="1174"/>
    </location>
</feature>
<feature type="sequence conflict" description="In Ref. 1; AAN28720." evidence="24" ref="1">
    <original>P</original>
    <variation>L</variation>
    <location>
        <position position="1064"/>
    </location>
</feature>
<feature type="sequence conflict" description="In Ref. 4; BAC41846." evidence="24" ref="4">
    <original>G</original>
    <variation>E</variation>
    <location>
        <position position="1222"/>
    </location>
</feature>
<feature type="turn" evidence="34">
    <location>
        <begin position="27"/>
        <end position="32"/>
    </location>
</feature>
<feature type="turn" evidence="34">
    <location>
        <begin position="35"/>
        <end position="39"/>
    </location>
</feature>
<feature type="helix" evidence="34">
    <location>
        <begin position="40"/>
        <end position="52"/>
    </location>
</feature>
<feature type="helix" evidence="34">
    <location>
        <begin position="55"/>
        <end position="66"/>
    </location>
</feature>
<feature type="turn" evidence="34">
    <location>
        <begin position="67"/>
        <end position="71"/>
    </location>
</feature>
<feature type="helix" evidence="34">
    <location>
        <begin position="78"/>
        <end position="84"/>
    </location>
</feature>
<feature type="helix" evidence="34">
    <location>
        <begin position="89"/>
        <end position="98"/>
    </location>
</feature>
<feature type="turn" evidence="34">
    <location>
        <begin position="103"/>
        <end position="112"/>
    </location>
</feature>
<feature type="helix" evidence="34">
    <location>
        <begin position="113"/>
        <end position="116"/>
    </location>
</feature>
<feature type="turn" evidence="34">
    <location>
        <begin position="117"/>
        <end position="119"/>
    </location>
</feature>
<feature type="helix" evidence="34">
    <location>
        <begin position="120"/>
        <end position="126"/>
    </location>
</feature>
<feature type="helix" evidence="34">
    <location>
        <begin position="132"/>
        <end position="134"/>
    </location>
</feature>
<feature type="strand" evidence="34">
    <location>
        <begin position="137"/>
        <end position="140"/>
    </location>
</feature>
<feature type="turn" evidence="34">
    <location>
        <begin position="141"/>
        <end position="143"/>
    </location>
</feature>
<feature type="helix" evidence="34">
    <location>
        <begin position="144"/>
        <end position="147"/>
    </location>
</feature>
<feature type="turn" evidence="34">
    <location>
        <begin position="148"/>
        <end position="150"/>
    </location>
</feature>
<feature type="helix" evidence="34">
    <location>
        <begin position="151"/>
        <end position="159"/>
    </location>
</feature>
<feature type="turn" evidence="34">
    <location>
        <begin position="160"/>
        <end position="163"/>
    </location>
</feature>
<feature type="helix" evidence="34">
    <location>
        <begin position="164"/>
        <end position="175"/>
    </location>
</feature>
<feature type="turn" evidence="34">
    <location>
        <begin position="176"/>
        <end position="178"/>
    </location>
</feature>
<feature type="helix" evidence="34">
    <location>
        <begin position="179"/>
        <end position="183"/>
    </location>
</feature>
<feature type="helix" evidence="34">
    <location>
        <begin position="187"/>
        <end position="190"/>
    </location>
</feature>
<feature type="turn" evidence="34">
    <location>
        <begin position="191"/>
        <end position="194"/>
    </location>
</feature>
<feature type="helix" evidence="34">
    <location>
        <begin position="195"/>
        <end position="199"/>
    </location>
</feature>
<feature type="turn" evidence="36">
    <location>
        <begin position="200"/>
        <end position="203"/>
    </location>
</feature>
<feature type="helix" evidence="34">
    <location>
        <begin position="205"/>
        <end position="220"/>
    </location>
</feature>
<feature type="turn" evidence="34">
    <location>
        <begin position="221"/>
        <end position="225"/>
    </location>
</feature>
<feature type="helix" evidence="34">
    <location>
        <begin position="226"/>
        <end position="232"/>
    </location>
</feature>
<feature type="helix" evidence="34">
    <location>
        <begin position="234"/>
        <end position="239"/>
    </location>
</feature>
<feature type="turn" evidence="34">
    <location>
        <begin position="245"/>
        <end position="253"/>
    </location>
</feature>
<feature type="helix" evidence="34">
    <location>
        <begin position="255"/>
        <end position="262"/>
    </location>
</feature>
<feature type="turn" evidence="34">
    <location>
        <begin position="263"/>
        <end position="265"/>
    </location>
</feature>
<feature type="helix" evidence="34">
    <location>
        <begin position="266"/>
        <end position="272"/>
    </location>
</feature>
<feature type="turn" evidence="34">
    <location>
        <begin position="273"/>
        <end position="278"/>
    </location>
</feature>
<feature type="helix" evidence="34">
    <location>
        <begin position="279"/>
        <end position="281"/>
    </location>
</feature>
<feature type="helix" evidence="34">
    <location>
        <begin position="283"/>
        <end position="286"/>
    </location>
</feature>
<feature type="helix" evidence="34">
    <location>
        <begin position="290"/>
        <end position="293"/>
    </location>
</feature>
<feature type="turn" evidence="34">
    <location>
        <begin position="294"/>
        <end position="297"/>
    </location>
</feature>
<feature type="helix" evidence="34">
    <location>
        <begin position="303"/>
        <end position="310"/>
    </location>
</feature>
<feature type="helix" evidence="34">
    <location>
        <begin position="313"/>
        <end position="316"/>
    </location>
</feature>
<feature type="turn" evidence="34">
    <location>
        <begin position="317"/>
        <end position="321"/>
    </location>
</feature>
<feature type="helix" evidence="34">
    <location>
        <begin position="322"/>
        <end position="325"/>
    </location>
</feature>
<feature type="helix" evidence="34">
    <location>
        <begin position="327"/>
        <end position="341"/>
    </location>
</feature>
<feature type="strand" evidence="34">
    <location>
        <begin position="352"/>
        <end position="354"/>
    </location>
</feature>
<feature type="strand" evidence="34">
    <location>
        <begin position="365"/>
        <end position="371"/>
    </location>
</feature>
<feature type="turn" evidence="34">
    <location>
        <begin position="382"/>
        <end position="385"/>
    </location>
</feature>
<feature type="strand" evidence="35">
    <location>
        <begin position="395"/>
        <end position="399"/>
    </location>
</feature>
<feature type="strand" evidence="34">
    <location>
        <begin position="401"/>
        <end position="403"/>
    </location>
</feature>
<feature type="turn" evidence="34">
    <location>
        <begin position="410"/>
        <end position="412"/>
    </location>
</feature>
<feature type="strand" evidence="34">
    <location>
        <begin position="420"/>
        <end position="428"/>
    </location>
</feature>
<feature type="helix" evidence="34">
    <location>
        <begin position="431"/>
        <end position="433"/>
    </location>
</feature>
<feature type="turn" evidence="34">
    <location>
        <begin position="436"/>
        <end position="438"/>
    </location>
</feature>
<feature type="strand" evidence="34">
    <location>
        <begin position="442"/>
        <end position="445"/>
    </location>
</feature>
<feature type="turn" evidence="34">
    <location>
        <begin position="457"/>
        <end position="460"/>
    </location>
</feature>
<feature type="helix" evidence="34">
    <location>
        <begin position="461"/>
        <end position="463"/>
    </location>
</feature>
<feature type="strand" evidence="34">
    <location>
        <begin position="464"/>
        <end position="468"/>
    </location>
</feature>
<feature type="helix" evidence="34">
    <location>
        <begin position="471"/>
        <end position="478"/>
    </location>
</feature>
<feature type="turn" evidence="34">
    <location>
        <begin position="479"/>
        <end position="481"/>
    </location>
</feature>
<feature type="turn" evidence="34">
    <location>
        <begin position="483"/>
        <end position="487"/>
    </location>
</feature>
<feature type="strand" evidence="34">
    <location>
        <begin position="488"/>
        <end position="493"/>
    </location>
</feature>
<feature type="turn" evidence="34">
    <location>
        <begin position="497"/>
        <end position="500"/>
    </location>
</feature>
<feature type="strand" evidence="35">
    <location>
        <begin position="506"/>
        <end position="508"/>
    </location>
</feature>
<feature type="helix" evidence="34">
    <location>
        <begin position="513"/>
        <end position="519"/>
    </location>
</feature>
<feature type="strand" evidence="34">
    <location>
        <begin position="523"/>
        <end position="526"/>
    </location>
</feature>
<feature type="helix" evidence="34">
    <location>
        <begin position="537"/>
        <end position="546"/>
    </location>
</feature>
<feature type="turn" evidence="34">
    <location>
        <begin position="547"/>
        <end position="549"/>
    </location>
</feature>
<feature type="strand" evidence="34">
    <location>
        <begin position="551"/>
        <end position="553"/>
    </location>
</feature>
<feature type="strand" evidence="34">
    <location>
        <begin position="558"/>
        <end position="561"/>
    </location>
</feature>
<feature type="helix" evidence="34">
    <location>
        <begin position="562"/>
        <end position="564"/>
    </location>
</feature>
<feature type="strand" evidence="34">
    <location>
        <begin position="565"/>
        <end position="567"/>
    </location>
</feature>
<feature type="strand" evidence="34">
    <location>
        <begin position="572"/>
        <end position="574"/>
    </location>
</feature>
<feature type="strand" evidence="34">
    <location>
        <begin position="576"/>
        <end position="581"/>
    </location>
</feature>
<feature type="turn" evidence="34">
    <location>
        <begin position="585"/>
        <end position="587"/>
    </location>
</feature>
<feature type="strand" evidence="34">
    <location>
        <begin position="588"/>
        <end position="590"/>
    </location>
</feature>
<feature type="strand" evidence="34">
    <location>
        <begin position="593"/>
        <end position="595"/>
    </location>
</feature>
<feature type="helix" evidence="34">
    <location>
        <begin position="596"/>
        <end position="604"/>
    </location>
</feature>
<feature type="helix" evidence="34">
    <location>
        <begin position="621"/>
        <end position="630"/>
    </location>
</feature>
<feature type="strand" evidence="34">
    <location>
        <begin position="634"/>
        <end position="638"/>
    </location>
</feature>
<feature type="turn" evidence="35">
    <location>
        <begin position="640"/>
        <end position="642"/>
    </location>
</feature>
<feature type="strand" evidence="34">
    <location>
        <begin position="645"/>
        <end position="647"/>
    </location>
</feature>
<feature type="strand" evidence="35">
    <location>
        <begin position="650"/>
        <end position="653"/>
    </location>
</feature>
<feature type="strand" evidence="34">
    <location>
        <begin position="655"/>
        <end position="657"/>
    </location>
</feature>
<feature type="helix" evidence="34">
    <location>
        <begin position="662"/>
        <end position="665"/>
    </location>
</feature>
<feature type="helix" evidence="34">
    <location>
        <begin position="672"/>
        <end position="679"/>
    </location>
</feature>
<feature type="turn" evidence="34">
    <location>
        <begin position="685"/>
        <end position="690"/>
    </location>
</feature>
<feature type="helix" evidence="34">
    <location>
        <begin position="691"/>
        <end position="694"/>
    </location>
</feature>
<feature type="turn" evidence="34">
    <location>
        <begin position="696"/>
        <end position="699"/>
    </location>
</feature>
<feature type="helix" evidence="34">
    <location>
        <begin position="700"/>
        <end position="707"/>
    </location>
</feature>
<feature type="turn" evidence="34">
    <location>
        <begin position="708"/>
        <end position="710"/>
    </location>
</feature>
<feature type="helix" evidence="34">
    <location>
        <begin position="711"/>
        <end position="714"/>
    </location>
</feature>
<feature type="turn" evidence="34">
    <location>
        <begin position="722"/>
        <end position="727"/>
    </location>
</feature>
<feature type="turn" evidence="34">
    <location>
        <begin position="729"/>
        <end position="731"/>
    </location>
</feature>
<feature type="helix" evidence="34">
    <location>
        <begin position="732"/>
        <end position="736"/>
    </location>
</feature>
<feature type="turn" evidence="36">
    <location>
        <begin position="737"/>
        <end position="739"/>
    </location>
</feature>
<feature type="helix" evidence="34">
    <location>
        <begin position="740"/>
        <end position="743"/>
    </location>
</feature>
<feature type="helix" evidence="34">
    <location>
        <begin position="746"/>
        <end position="750"/>
    </location>
</feature>
<feature type="turn" evidence="34">
    <location>
        <begin position="751"/>
        <end position="753"/>
    </location>
</feature>
<feature type="turn" evidence="34">
    <location>
        <begin position="755"/>
        <end position="759"/>
    </location>
</feature>
<feature type="helix" evidence="34">
    <location>
        <begin position="760"/>
        <end position="771"/>
    </location>
</feature>
<feature type="helix" evidence="34">
    <location>
        <begin position="776"/>
        <end position="778"/>
    </location>
</feature>
<feature type="helix" evidence="35">
    <location>
        <begin position="782"/>
        <end position="784"/>
    </location>
</feature>
<feature type="turn" evidence="34">
    <location>
        <begin position="786"/>
        <end position="788"/>
    </location>
</feature>
<feature type="strand" evidence="34">
    <location>
        <begin position="789"/>
        <end position="791"/>
    </location>
</feature>
<feature type="turn" evidence="34">
    <location>
        <begin position="792"/>
        <end position="795"/>
    </location>
</feature>
<feature type="strand" evidence="34">
    <location>
        <begin position="796"/>
        <end position="800"/>
    </location>
</feature>
<feature type="helix" evidence="34">
    <location>
        <begin position="801"/>
        <end position="804"/>
    </location>
</feature>
<feature type="turn" evidence="34">
    <location>
        <begin position="805"/>
        <end position="808"/>
    </location>
</feature>
<feature type="helix" evidence="34">
    <location>
        <begin position="809"/>
        <end position="820"/>
    </location>
</feature>
<feature type="turn" evidence="34">
    <location>
        <begin position="821"/>
        <end position="823"/>
    </location>
</feature>
<feature type="helix" evidence="34">
    <location>
        <begin position="825"/>
        <end position="828"/>
    </location>
</feature>
<feature type="helix" evidence="34">
    <location>
        <begin position="832"/>
        <end position="852"/>
    </location>
</feature>
<feature type="turn" evidence="34">
    <location>
        <begin position="853"/>
        <end position="855"/>
    </location>
</feature>
<feature type="helix" evidence="34">
    <location>
        <begin position="861"/>
        <end position="864"/>
    </location>
</feature>
<feature type="helix" evidence="34">
    <location>
        <begin position="867"/>
        <end position="872"/>
    </location>
</feature>
<feature type="turn" evidence="34">
    <location>
        <begin position="873"/>
        <end position="878"/>
    </location>
</feature>
<feature type="helix" evidence="34">
    <location>
        <begin position="879"/>
        <end position="883"/>
    </location>
</feature>
<feature type="helix" evidence="34">
    <location>
        <begin position="884"/>
        <end position="886"/>
    </location>
</feature>
<feature type="helix" evidence="34">
    <location>
        <begin position="888"/>
        <end position="891"/>
    </location>
</feature>
<feature type="helix" evidence="34">
    <location>
        <begin position="893"/>
        <end position="896"/>
    </location>
</feature>
<feature type="turn" evidence="34">
    <location>
        <begin position="897"/>
        <end position="899"/>
    </location>
</feature>
<feature type="helix" evidence="34">
    <location>
        <begin position="900"/>
        <end position="920"/>
    </location>
</feature>
<feature type="helix" evidence="34">
    <location>
        <begin position="922"/>
        <end position="925"/>
    </location>
</feature>
<feature type="helix" evidence="34">
    <location>
        <begin position="928"/>
        <end position="938"/>
    </location>
</feature>
<feature type="turn" evidence="34">
    <location>
        <begin position="939"/>
        <end position="942"/>
    </location>
</feature>
<feature type="turn" evidence="34">
    <location>
        <begin position="946"/>
        <end position="948"/>
    </location>
</feature>
<feature type="helix" evidence="34">
    <location>
        <begin position="949"/>
        <end position="966"/>
    </location>
</feature>
<feature type="helix" evidence="34">
    <location>
        <begin position="970"/>
        <end position="974"/>
    </location>
</feature>
<feature type="strand" evidence="35">
    <location>
        <begin position="975"/>
        <end position="977"/>
    </location>
</feature>
<feature type="strand" evidence="34">
    <location>
        <begin position="979"/>
        <end position="981"/>
    </location>
</feature>
<feature type="turn" evidence="34">
    <location>
        <begin position="983"/>
        <end position="987"/>
    </location>
</feature>
<feature type="strand" evidence="34">
    <location>
        <begin position="998"/>
        <end position="1001"/>
    </location>
</feature>
<feature type="strand" evidence="34">
    <location>
        <begin position="1011"/>
        <end position="1017"/>
    </location>
</feature>
<feature type="strand" evidence="34">
    <location>
        <begin position="1020"/>
        <end position="1022"/>
    </location>
</feature>
<feature type="strand" evidence="34">
    <location>
        <begin position="1028"/>
        <end position="1034"/>
    </location>
</feature>
<feature type="turn" evidence="34">
    <location>
        <begin position="1046"/>
        <end position="1048"/>
    </location>
</feature>
<feature type="turn" evidence="34">
    <location>
        <begin position="1055"/>
        <end position="1060"/>
    </location>
</feature>
<feature type="strand" evidence="34">
    <location>
        <begin position="1065"/>
        <end position="1067"/>
    </location>
</feature>
<feature type="strand" evidence="34">
    <location>
        <begin position="1069"/>
        <end position="1071"/>
    </location>
</feature>
<feature type="helix" evidence="34">
    <location>
        <begin position="1076"/>
        <end position="1078"/>
    </location>
</feature>
<feature type="turn" evidence="34">
    <location>
        <begin position="1082"/>
        <end position="1084"/>
    </location>
</feature>
<feature type="helix" evidence="34">
    <location>
        <begin position="1085"/>
        <end position="1087"/>
    </location>
</feature>
<feature type="strand" evidence="36">
    <location>
        <begin position="1088"/>
        <end position="1090"/>
    </location>
</feature>
<feature type="turn" evidence="34">
    <location>
        <begin position="1102"/>
        <end position="1104"/>
    </location>
</feature>
<feature type="strand" evidence="34">
    <location>
        <begin position="1105"/>
        <end position="1107"/>
    </location>
</feature>
<feature type="strand" evidence="34">
    <location>
        <begin position="1110"/>
        <end position="1112"/>
    </location>
</feature>
<feature type="helix" evidence="34">
    <location>
        <begin position="1119"/>
        <end position="1122"/>
    </location>
</feature>
<feature type="turn" evidence="35">
    <location>
        <begin position="1123"/>
        <end position="1126"/>
    </location>
</feature>
<feature type="helix" evidence="34">
    <location>
        <begin position="1128"/>
        <end position="1132"/>
    </location>
</feature>
<feature type="turn" evidence="35">
    <location>
        <begin position="1135"/>
        <end position="1138"/>
    </location>
</feature>
<feature type="strand" evidence="34">
    <location>
        <begin position="1143"/>
        <end position="1146"/>
    </location>
</feature>
<feature type="helix" evidence="34">
    <location>
        <begin position="1151"/>
        <end position="1164"/>
    </location>
</feature>
<feature type="strand" evidence="34">
    <location>
        <begin position="1168"/>
        <end position="1171"/>
    </location>
</feature>
<feature type="helix" evidence="34">
    <location>
        <begin position="1188"/>
        <end position="1193"/>
    </location>
</feature>
<feature type="turn" evidence="34">
    <location>
        <begin position="1194"/>
        <end position="1197"/>
    </location>
</feature>
<feature type="strand" evidence="34">
    <location>
        <begin position="1198"/>
        <end position="1201"/>
    </location>
</feature>
<feature type="strand" evidence="34">
    <location>
        <begin position="1205"/>
        <end position="1209"/>
    </location>
</feature>
<feature type="strand" evidence="34">
    <location>
        <begin position="1217"/>
        <end position="1220"/>
    </location>
</feature>
<feature type="strand" evidence="34">
    <location>
        <begin position="1223"/>
        <end position="1227"/>
    </location>
</feature>
<feature type="strand" evidence="34">
    <location>
        <begin position="1232"/>
        <end position="1238"/>
    </location>
</feature>
<feature type="helix" evidence="34">
    <location>
        <begin position="1241"/>
        <end position="1246"/>
    </location>
</feature>
<dbReference type="EMBL" id="AF540384">
    <property type="protein sequence ID" value="AAN28720.2"/>
    <property type="molecule type" value="mRNA"/>
</dbReference>
<dbReference type="EMBL" id="AP000386">
    <property type="protein sequence ID" value="BAB02129.1"/>
    <property type="molecule type" value="Genomic_DNA"/>
</dbReference>
<dbReference type="EMBL" id="CP002686">
    <property type="protein sequence ID" value="AEE77498.1"/>
    <property type="molecule type" value="Genomic_DNA"/>
</dbReference>
<dbReference type="EMBL" id="AK117168">
    <property type="protein sequence ID" value="BAC41846.1"/>
    <property type="molecule type" value="mRNA"/>
</dbReference>
<dbReference type="RefSeq" id="NP_189528.1">
    <property type="nucleotide sequence ID" value="NM_113807.3"/>
</dbReference>
<dbReference type="PDB" id="8WOI">
    <property type="method" value="EM"/>
    <property type="resolution" value="3.40 A"/>
    <property type="chains" value="A=1-1252"/>
</dbReference>
<dbReference type="PDB" id="8WOM">
    <property type="method" value="EM"/>
    <property type="resolution" value="3.50 A"/>
    <property type="chains" value="A=1-1252"/>
</dbReference>
<dbReference type="PDB" id="8WOO">
    <property type="method" value="EM"/>
    <property type="resolution" value="3.90 A"/>
    <property type="chains" value="A=1-1252"/>
</dbReference>
<dbReference type="PDB" id="8WP0">
    <property type="method" value="EM"/>
    <property type="resolution" value="3.40 A"/>
    <property type="chains" value="A=1-1252"/>
</dbReference>
<dbReference type="PDBsum" id="8WOI"/>
<dbReference type="PDBsum" id="8WOM"/>
<dbReference type="PDBsum" id="8WOO"/>
<dbReference type="PDBsum" id="8WP0"/>
<dbReference type="EMDB" id="EMD-37690"/>
<dbReference type="EMDB" id="EMD-37692"/>
<dbReference type="EMDB" id="EMD-37694"/>
<dbReference type="EMDB" id="EMD-37705"/>
<dbReference type="SMR" id="Q9LJX0"/>
<dbReference type="BioGRID" id="7848">
    <property type="interactions" value="25"/>
</dbReference>
<dbReference type="FunCoup" id="Q9LJX0">
    <property type="interactions" value="433"/>
</dbReference>
<dbReference type="IntAct" id="Q9LJX0">
    <property type="interactions" value="4"/>
</dbReference>
<dbReference type="STRING" id="3702.Q9LJX0"/>
<dbReference type="TCDB" id="3.A.1.201.6">
    <property type="family name" value="the atp-binding cassette (abc) superfamily"/>
</dbReference>
<dbReference type="GlyCosmos" id="Q9LJX0">
    <property type="glycosylation" value="5 sites, No reported glycans"/>
</dbReference>
<dbReference type="GlyGen" id="Q9LJX0">
    <property type="glycosylation" value="5 sites"/>
</dbReference>
<dbReference type="iPTMnet" id="Q9LJX0"/>
<dbReference type="PaxDb" id="3702-AT3G28860.1"/>
<dbReference type="ProteomicsDB" id="243294"/>
<dbReference type="EnsemblPlants" id="AT3G28860.1">
    <property type="protein sequence ID" value="AT3G28860.1"/>
    <property type="gene ID" value="AT3G28860"/>
</dbReference>
<dbReference type="GeneID" id="822519"/>
<dbReference type="Gramene" id="AT3G28860.1">
    <property type="protein sequence ID" value="AT3G28860.1"/>
    <property type="gene ID" value="AT3G28860"/>
</dbReference>
<dbReference type="KEGG" id="ath:AT3G28860"/>
<dbReference type="Araport" id="AT3G28860"/>
<dbReference type="TAIR" id="AT3G28860">
    <property type="gene designation" value="ABCB19"/>
</dbReference>
<dbReference type="eggNOG" id="KOG0055">
    <property type="taxonomic scope" value="Eukaryota"/>
</dbReference>
<dbReference type="HOGENOM" id="CLU_000604_17_2_1"/>
<dbReference type="InParanoid" id="Q9LJX0"/>
<dbReference type="OMA" id="GFGQEEQ"/>
<dbReference type="PhylomeDB" id="Q9LJX0"/>
<dbReference type="BioCyc" id="ARA:AT3G28860-MONOMER"/>
<dbReference type="PRO" id="PR:Q9LJX0"/>
<dbReference type="Proteomes" id="UP000006548">
    <property type="component" value="Chromosome 3"/>
</dbReference>
<dbReference type="ExpressionAtlas" id="Q9LJX0">
    <property type="expression patterns" value="baseline and differential"/>
</dbReference>
<dbReference type="GO" id="GO:0005829">
    <property type="term" value="C:cytosol"/>
    <property type="evidence" value="ECO:0007005"/>
    <property type="project" value="TAIR"/>
</dbReference>
<dbReference type="GO" id="GO:0005886">
    <property type="term" value="C:plasma membrane"/>
    <property type="evidence" value="ECO:0000314"/>
    <property type="project" value="TAIR"/>
</dbReference>
<dbReference type="GO" id="GO:0140359">
    <property type="term" value="F:ABC-type transporter activity"/>
    <property type="evidence" value="ECO:0000314"/>
    <property type="project" value="UniProtKB"/>
</dbReference>
<dbReference type="GO" id="GO:0005524">
    <property type="term" value="F:ATP binding"/>
    <property type="evidence" value="ECO:0007669"/>
    <property type="project" value="UniProtKB-KW"/>
</dbReference>
<dbReference type="GO" id="GO:0016887">
    <property type="term" value="F:ATP hydrolysis activity"/>
    <property type="evidence" value="ECO:0000314"/>
    <property type="project" value="UniProtKB"/>
</dbReference>
<dbReference type="GO" id="GO:0010329">
    <property type="term" value="F:auxin efflux transmembrane transporter activity"/>
    <property type="evidence" value="ECO:0000314"/>
    <property type="project" value="UniProtKB"/>
</dbReference>
<dbReference type="GO" id="GO:0010541">
    <property type="term" value="P:acropetal auxin transport"/>
    <property type="evidence" value="ECO:0000315"/>
    <property type="project" value="TAIR"/>
</dbReference>
<dbReference type="GO" id="GO:0043481">
    <property type="term" value="P:anthocyanin accumulation in tissues in response to UV light"/>
    <property type="evidence" value="ECO:0000315"/>
    <property type="project" value="TAIR"/>
</dbReference>
<dbReference type="GO" id="GO:0010315">
    <property type="term" value="P:auxin export across the plasma membrane"/>
    <property type="evidence" value="ECO:0000314"/>
    <property type="project" value="UniProtKB"/>
</dbReference>
<dbReference type="GO" id="GO:0009926">
    <property type="term" value="P:auxin polar transport"/>
    <property type="evidence" value="ECO:0000314"/>
    <property type="project" value="UniProtKB"/>
</dbReference>
<dbReference type="GO" id="GO:0060918">
    <property type="term" value="P:auxin transport"/>
    <property type="evidence" value="ECO:0000315"/>
    <property type="project" value="TAIR"/>
</dbReference>
<dbReference type="GO" id="GO:0009734">
    <property type="term" value="P:auxin-activated signaling pathway"/>
    <property type="evidence" value="ECO:0007669"/>
    <property type="project" value="UniProtKB-KW"/>
</dbReference>
<dbReference type="GO" id="GO:0010540">
    <property type="term" value="P:basipetal auxin transport"/>
    <property type="evidence" value="ECO:0000315"/>
    <property type="project" value="TAIR"/>
</dbReference>
<dbReference type="GO" id="GO:0090691">
    <property type="term" value="P:formation of plant organ boundary"/>
    <property type="evidence" value="ECO:0000315"/>
    <property type="project" value="TAIR"/>
</dbReference>
<dbReference type="GO" id="GO:0048527">
    <property type="term" value="P:lateral root development"/>
    <property type="evidence" value="ECO:0000315"/>
    <property type="project" value="TAIR"/>
</dbReference>
<dbReference type="GO" id="GO:0009640">
    <property type="term" value="P:photomorphogenesis"/>
    <property type="evidence" value="ECO:0000315"/>
    <property type="project" value="TAIR"/>
</dbReference>
<dbReference type="GO" id="GO:0009958">
    <property type="term" value="P:positive gravitropism"/>
    <property type="evidence" value="ECO:0000315"/>
    <property type="project" value="TAIR"/>
</dbReference>
<dbReference type="GO" id="GO:1900459">
    <property type="term" value="P:positive regulation of brassinosteroid mediated signaling pathway"/>
    <property type="evidence" value="ECO:0000315"/>
    <property type="project" value="UniProtKB"/>
</dbReference>
<dbReference type="GO" id="GO:0008361">
    <property type="term" value="P:regulation of cell size"/>
    <property type="evidence" value="ECO:0000315"/>
    <property type="project" value="TAIR"/>
</dbReference>
<dbReference type="GO" id="GO:0009733">
    <property type="term" value="P:response to auxin"/>
    <property type="evidence" value="ECO:0000315"/>
    <property type="project" value="TAIR"/>
</dbReference>
<dbReference type="GO" id="GO:0009637">
    <property type="term" value="P:response to blue light"/>
    <property type="evidence" value="ECO:0000315"/>
    <property type="project" value="TAIR"/>
</dbReference>
<dbReference type="GO" id="GO:0009741">
    <property type="term" value="P:response to brassinosteroid"/>
    <property type="evidence" value="ECO:0000315"/>
    <property type="project" value="UniProtKB"/>
</dbReference>
<dbReference type="GO" id="GO:0010218">
    <property type="term" value="P:response to far red light"/>
    <property type="evidence" value="ECO:0000315"/>
    <property type="project" value="TAIR"/>
</dbReference>
<dbReference type="GO" id="GO:0009639">
    <property type="term" value="P:response to red or far red light"/>
    <property type="evidence" value="ECO:0000315"/>
    <property type="project" value="TAIR"/>
</dbReference>
<dbReference type="GO" id="GO:0048364">
    <property type="term" value="P:root development"/>
    <property type="evidence" value="ECO:0000315"/>
    <property type="project" value="TAIR"/>
</dbReference>
<dbReference type="GO" id="GO:0048443">
    <property type="term" value="P:stamen development"/>
    <property type="evidence" value="ECO:0000316"/>
    <property type="project" value="TAIR"/>
</dbReference>
<dbReference type="CDD" id="cd18577">
    <property type="entry name" value="ABC_6TM_Pgp_ABCB1_D1_like"/>
    <property type="match status" value="1"/>
</dbReference>
<dbReference type="CDD" id="cd18578">
    <property type="entry name" value="ABC_6TM_Pgp_ABCB1_D2_like"/>
    <property type="match status" value="1"/>
</dbReference>
<dbReference type="CDD" id="cd03249">
    <property type="entry name" value="ABC_MTABC3_MDL1_MDL2"/>
    <property type="match status" value="2"/>
</dbReference>
<dbReference type="FunFam" id="1.20.1560.10:FF:000009">
    <property type="entry name" value="ABC transporter B family member 1"/>
    <property type="match status" value="1"/>
</dbReference>
<dbReference type="FunFam" id="1.20.1560.10:FF:000029">
    <property type="entry name" value="ABC transporter B family member 1"/>
    <property type="match status" value="1"/>
</dbReference>
<dbReference type="FunFam" id="3.40.50.300:FF:000251">
    <property type="entry name" value="ABC transporter B family member 19"/>
    <property type="match status" value="2"/>
</dbReference>
<dbReference type="Gene3D" id="1.20.1560.10">
    <property type="entry name" value="ABC transporter type 1, transmembrane domain"/>
    <property type="match status" value="1"/>
</dbReference>
<dbReference type="Gene3D" id="3.40.50.300">
    <property type="entry name" value="P-loop containing nucleotide triphosphate hydrolases"/>
    <property type="match status" value="2"/>
</dbReference>
<dbReference type="InterPro" id="IPR003593">
    <property type="entry name" value="AAA+_ATPase"/>
</dbReference>
<dbReference type="InterPro" id="IPR011527">
    <property type="entry name" value="ABC1_TM_dom"/>
</dbReference>
<dbReference type="InterPro" id="IPR036640">
    <property type="entry name" value="ABC1_TM_sf"/>
</dbReference>
<dbReference type="InterPro" id="IPR003439">
    <property type="entry name" value="ABC_transporter-like_ATP-bd"/>
</dbReference>
<dbReference type="InterPro" id="IPR017871">
    <property type="entry name" value="ABC_transporter-like_CS"/>
</dbReference>
<dbReference type="InterPro" id="IPR027417">
    <property type="entry name" value="P-loop_NTPase"/>
</dbReference>
<dbReference type="InterPro" id="IPR039421">
    <property type="entry name" value="Type_1_exporter"/>
</dbReference>
<dbReference type="PANTHER" id="PTHR43394:SF11">
    <property type="entry name" value="ATP-BINDING CASSETTE TRANSPORTER"/>
    <property type="match status" value="1"/>
</dbReference>
<dbReference type="PANTHER" id="PTHR43394">
    <property type="entry name" value="ATP-DEPENDENT PERMEASE MDL1, MITOCHONDRIAL"/>
    <property type="match status" value="1"/>
</dbReference>
<dbReference type="Pfam" id="PF00664">
    <property type="entry name" value="ABC_membrane"/>
    <property type="match status" value="2"/>
</dbReference>
<dbReference type="Pfam" id="PF00005">
    <property type="entry name" value="ABC_tran"/>
    <property type="match status" value="2"/>
</dbReference>
<dbReference type="SMART" id="SM00382">
    <property type="entry name" value="AAA"/>
    <property type="match status" value="2"/>
</dbReference>
<dbReference type="SUPFAM" id="SSF90123">
    <property type="entry name" value="ABC transporter transmembrane region"/>
    <property type="match status" value="2"/>
</dbReference>
<dbReference type="SUPFAM" id="SSF52540">
    <property type="entry name" value="P-loop containing nucleoside triphosphate hydrolases"/>
    <property type="match status" value="2"/>
</dbReference>
<dbReference type="PROSITE" id="PS50929">
    <property type="entry name" value="ABC_TM1F"/>
    <property type="match status" value="2"/>
</dbReference>
<dbReference type="PROSITE" id="PS00211">
    <property type="entry name" value="ABC_TRANSPORTER_1"/>
    <property type="match status" value="2"/>
</dbReference>
<dbReference type="PROSITE" id="PS50893">
    <property type="entry name" value="ABC_TRANSPORTER_2"/>
    <property type="match status" value="2"/>
</dbReference>
<name>AB19B_ARATH</name>
<organism>
    <name type="scientific">Arabidopsis thaliana</name>
    <name type="common">Mouse-ear cress</name>
    <dbReference type="NCBI Taxonomy" id="3702"/>
    <lineage>
        <taxon>Eukaryota</taxon>
        <taxon>Viridiplantae</taxon>
        <taxon>Streptophyta</taxon>
        <taxon>Embryophyta</taxon>
        <taxon>Tracheophyta</taxon>
        <taxon>Spermatophyta</taxon>
        <taxon>Magnoliopsida</taxon>
        <taxon>eudicotyledons</taxon>
        <taxon>Gunneridae</taxon>
        <taxon>Pentapetalae</taxon>
        <taxon>rosids</taxon>
        <taxon>malvids</taxon>
        <taxon>Brassicales</taxon>
        <taxon>Brassicaceae</taxon>
        <taxon>Camelineae</taxon>
        <taxon>Arabidopsis</taxon>
    </lineage>
</organism>